<proteinExistence type="inferred from homology"/>
<accession>B8EBL4</accession>
<feature type="chain" id="PRO_1000195564" description="Large ribosomal subunit protein uL10">
    <location>
        <begin position="1"/>
        <end position="166"/>
    </location>
</feature>
<keyword id="KW-0687">Ribonucleoprotein</keyword>
<keyword id="KW-0689">Ribosomal protein</keyword>
<keyword id="KW-0694">RNA-binding</keyword>
<keyword id="KW-0699">rRNA-binding</keyword>
<evidence type="ECO:0000255" key="1">
    <source>
        <dbReference type="HAMAP-Rule" id="MF_00362"/>
    </source>
</evidence>
<evidence type="ECO:0000305" key="2"/>
<protein>
    <recommendedName>
        <fullName evidence="1">Large ribosomal subunit protein uL10</fullName>
    </recommendedName>
    <alternativeName>
        <fullName evidence="2">50S ribosomal protein L10</fullName>
    </alternativeName>
</protein>
<gene>
    <name evidence="1" type="primary">rplJ</name>
    <name type="ordered locus">Sbal223_4065</name>
</gene>
<name>RL10_SHEB2</name>
<organism>
    <name type="scientific">Shewanella baltica (strain OS223)</name>
    <dbReference type="NCBI Taxonomy" id="407976"/>
    <lineage>
        <taxon>Bacteria</taxon>
        <taxon>Pseudomonadati</taxon>
        <taxon>Pseudomonadota</taxon>
        <taxon>Gammaproteobacteria</taxon>
        <taxon>Alteromonadales</taxon>
        <taxon>Shewanellaceae</taxon>
        <taxon>Shewanella</taxon>
    </lineage>
</organism>
<dbReference type="EMBL" id="CP001252">
    <property type="protein sequence ID" value="ACK48538.1"/>
    <property type="molecule type" value="Genomic_DNA"/>
</dbReference>
<dbReference type="RefSeq" id="WP_006083609.1">
    <property type="nucleotide sequence ID" value="NC_011663.1"/>
</dbReference>
<dbReference type="GeneID" id="67441751"/>
<dbReference type="KEGG" id="sbp:Sbal223_4065"/>
<dbReference type="HOGENOM" id="CLU_092227_0_2_6"/>
<dbReference type="Proteomes" id="UP000002507">
    <property type="component" value="Chromosome"/>
</dbReference>
<dbReference type="GO" id="GO:0015934">
    <property type="term" value="C:large ribosomal subunit"/>
    <property type="evidence" value="ECO:0007669"/>
    <property type="project" value="InterPro"/>
</dbReference>
<dbReference type="GO" id="GO:0070180">
    <property type="term" value="F:large ribosomal subunit rRNA binding"/>
    <property type="evidence" value="ECO:0007669"/>
    <property type="project" value="UniProtKB-UniRule"/>
</dbReference>
<dbReference type="GO" id="GO:0003735">
    <property type="term" value="F:structural constituent of ribosome"/>
    <property type="evidence" value="ECO:0007669"/>
    <property type="project" value="InterPro"/>
</dbReference>
<dbReference type="GO" id="GO:0006412">
    <property type="term" value="P:translation"/>
    <property type="evidence" value="ECO:0007669"/>
    <property type="project" value="UniProtKB-UniRule"/>
</dbReference>
<dbReference type="CDD" id="cd05797">
    <property type="entry name" value="Ribosomal_L10"/>
    <property type="match status" value="1"/>
</dbReference>
<dbReference type="FunFam" id="3.30.70.1730:FF:000001">
    <property type="entry name" value="50S ribosomal protein L10"/>
    <property type="match status" value="1"/>
</dbReference>
<dbReference type="Gene3D" id="3.30.70.1730">
    <property type="match status" value="1"/>
</dbReference>
<dbReference type="Gene3D" id="6.10.250.2350">
    <property type="match status" value="1"/>
</dbReference>
<dbReference type="HAMAP" id="MF_00362">
    <property type="entry name" value="Ribosomal_uL10"/>
    <property type="match status" value="1"/>
</dbReference>
<dbReference type="InterPro" id="IPR001790">
    <property type="entry name" value="Ribosomal_uL10"/>
</dbReference>
<dbReference type="InterPro" id="IPR043141">
    <property type="entry name" value="Ribosomal_uL10-like_sf"/>
</dbReference>
<dbReference type="InterPro" id="IPR022973">
    <property type="entry name" value="Ribosomal_uL10_bac"/>
</dbReference>
<dbReference type="InterPro" id="IPR047865">
    <property type="entry name" value="Ribosomal_uL10_bac_type"/>
</dbReference>
<dbReference type="InterPro" id="IPR002363">
    <property type="entry name" value="Ribosomal_uL10_CS_bac"/>
</dbReference>
<dbReference type="NCBIfam" id="NF000955">
    <property type="entry name" value="PRK00099.1-1"/>
    <property type="match status" value="1"/>
</dbReference>
<dbReference type="PANTHER" id="PTHR11560">
    <property type="entry name" value="39S RIBOSOMAL PROTEIN L10, MITOCHONDRIAL"/>
    <property type="match status" value="1"/>
</dbReference>
<dbReference type="Pfam" id="PF00466">
    <property type="entry name" value="Ribosomal_L10"/>
    <property type="match status" value="1"/>
</dbReference>
<dbReference type="SUPFAM" id="SSF160369">
    <property type="entry name" value="Ribosomal protein L10-like"/>
    <property type="match status" value="1"/>
</dbReference>
<dbReference type="PROSITE" id="PS01109">
    <property type="entry name" value="RIBOSOMAL_L10"/>
    <property type="match status" value="1"/>
</dbReference>
<reference key="1">
    <citation type="submission" date="2008-12" db="EMBL/GenBank/DDBJ databases">
        <title>Complete sequence of chromosome of Shewanella baltica OS223.</title>
        <authorList>
            <consortium name="US DOE Joint Genome Institute"/>
            <person name="Lucas S."/>
            <person name="Copeland A."/>
            <person name="Lapidus A."/>
            <person name="Glavina del Rio T."/>
            <person name="Dalin E."/>
            <person name="Tice H."/>
            <person name="Bruce D."/>
            <person name="Goodwin L."/>
            <person name="Pitluck S."/>
            <person name="Chertkov O."/>
            <person name="Meincke L."/>
            <person name="Brettin T."/>
            <person name="Detter J.C."/>
            <person name="Han C."/>
            <person name="Kuske C.R."/>
            <person name="Larimer F."/>
            <person name="Land M."/>
            <person name="Hauser L."/>
            <person name="Kyrpides N."/>
            <person name="Ovchinnikova G."/>
            <person name="Brettar I."/>
            <person name="Rodrigues J."/>
            <person name="Konstantinidis K."/>
            <person name="Tiedje J."/>
        </authorList>
    </citation>
    <scope>NUCLEOTIDE SEQUENCE [LARGE SCALE GENOMIC DNA]</scope>
    <source>
        <strain>OS223</strain>
    </source>
</reference>
<comment type="function">
    <text evidence="1">Forms part of the ribosomal stalk, playing a central role in the interaction of the ribosome with GTP-bound translation factors.</text>
</comment>
<comment type="subunit">
    <text evidence="1">Part of the ribosomal stalk of the 50S ribosomal subunit. The N-terminus interacts with L11 and the large rRNA to form the base of the stalk. The C-terminus forms an elongated spine to which L12 dimers bind in a sequential fashion forming a multimeric L10(L12)X complex.</text>
</comment>
<comment type="similarity">
    <text evidence="1">Belongs to the universal ribosomal protein uL10 family.</text>
</comment>
<sequence length="166" mass="17757">MALRLEDKKAIVAEVNEAAKGALSAVAADSRGVTVGAMTGLRKKAREAGVYVRVVRNTLARRAVEGTAFECLAETFTGPTLIAFSLEHPGAAARLLKDFAKEQANFEVKGAAFEGNFIPAAEIDRLAKLPTYEEALAQLMMTMKEASAGKFVRTLAALRDQKQEAA</sequence>